<keyword id="KW-0648">Protein biosynthesis</keyword>
<keyword id="KW-0808">Transferase</keyword>
<organism>
    <name type="scientific">Methylacidiphilum infernorum (isolate V4)</name>
    <name type="common">Methylokorus infernorum (strain V4)</name>
    <dbReference type="NCBI Taxonomy" id="481448"/>
    <lineage>
        <taxon>Bacteria</taxon>
        <taxon>Pseudomonadati</taxon>
        <taxon>Verrucomicrobiota</taxon>
        <taxon>Methylacidiphilae</taxon>
        <taxon>Methylacidiphilales</taxon>
        <taxon>Methylacidiphilaceae</taxon>
        <taxon>Methylacidiphilum (ex Ratnadevi et al. 2023)</taxon>
    </lineage>
</organism>
<comment type="function">
    <text evidence="1">Attaches a formyl group to the free amino group of methionyl-tRNA(fMet). The formyl group appears to play a dual role in the initiator identity of N-formylmethionyl-tRNA by promoting its recognition by IF2 and preventing the misappropriation of this tRNA by the elongation apparatus.</text>
</comment>
<comment type="catalytic activity">
    <reaction evidence="1">
        <text>L-methionyl-tRNA(fMet) + (6R)-10-formyltetrahydrofolate = N-formyl-L-methionyl-tRNA(fMet) + (6S)-5,6,7,8-tetrahydrofolate + H(+)</text>
        <dbReference type="Rhea" id="RHEA:24380"/>
        <dbReference type="Rhea" id="RHEA-COMP:9952"/>
        <dbReference type="Rhea" id="RHEA-COMP:9953"/>
        <dbReference type="ChEBI" id="CHEBI:15378"/>
        <dbReference type="ChEBI" id="CHEBI:57453"/>
        <dbReference type="ChEBI" id="CHEBI:78530"/>
        <dbReference type="ChEBI" id="CHEBI:78844"/>
        <dbReference type="ChEBI" id="CHEBI:195366"/>
        <dbReference type="EC" id="2.1.2.9"/>
    </reaction>
</comment>
<comment type="similarity">
    <text evidence="1">Belongs to the Fmt family.</text>
</comment>
<sequence length="320" mass="35267">MMRVVFIGTGDFGVPSLEAIALDGRYTIPAVVTQADKPLGRQKEVIPSPIKRTALKHHIWVFQPENINSAGSIQQIQFLKPDLLVVCDYGQILSKAVLEIPSIGALNIHGSLLPKYRGASPIQAAIMNRDKETGVTVIWMDEGIDTGDILMSDKLLVRSTDTAETLHHRLAELGARLIIQSLEAIRAGKAPRIPQNNALASYAKKIKKEQALIDWTKDRHEIDAMIRAFNPWPVAFTTVWIGGEKKILKIFKVIISHRAKGMPGEVVRIDRHGILVAAGRSGGLLLREVQLEGRKRMHAADFARGARLAIGTVLGQKDEQ</sequence>
<accession>B3DXI7</accession>
<name>FMT_METI4</name>
<reference key="1">
    <citation type="journal article" date="2008" name="Biol. Direct">
        <title>Complete genome sequence of the extremely acidophilic methanotroph isolate V4, Methylacidiphilum infernorum, a representative of the bacterial phylum Verrucomicrobia.</title>
        <authorList>
            <person name="Hou S."/>
            <person name="Makarova K.S."/>
            <person name="Saw J.H."/>
            <person name="Senin P."/>
            <person name="Ly B.V."/>
            <person name="Zhou Z."/>
            <person name="Ren Y."/>
            <person name="Wang J."/>
            <person name="Galperin M.Y."/>
            <person name="Omelchenko M.V."/>
            <person name="Wolf Y.I."/>
            <person name="Yutin N."/>
            <person name="Koonin E.V."/>
            <person name="Stott M.B."/>
            <person name="Mountain B.W."/>
            <person name="Crowe M.A."/>
            <person name="Smirnova A.V."/>
            <person name="Dunfield P.F."/>
            <person name="Feng L."/>
            <person name="Wang L."/>
            <person name="Alam M."/>
        </authorList>
    </citation>
    <scope>NUCLEOTIDE SEQUENCE [LARGE SCALE GENOMIC DNA]</scope>
    <source>
        <strain>Isolate V4</strain>
    </source>
</reference>
<gene>
    <name evidence="1" type="primary">fmt</name>
    <name type="ordered locus">Minf_0161</name>
</gene>
<evidence type="ECO:0000255" key="1">
    <source>
        <dbReference type="HAMAP-Rule" id="MF_00182"/>
    </source>
</evidence>
<feature type="chain" id="PRO_1000098417" description="Methionyl-tRNA formyltransferase">
    <location>
        <begin position="1"/>
        <end position="320"/>
    </location>
</feature>
<feature type="binding site" evidence="1">
    <location>
        <begin position="111"/>
        <end position="114"/>
    </location>
    <ligand>
        <name>(6S)-5,6,7,8-tetrahydrofolate</name>
        <dbReference type="ChEBI" id="CHEBI:57453"/>
    </ligand>
</feature>
<dbReference type="EC" id="2.1.2.9" evidence="1"/>
<dbReference type="EMBL" id="CP000975">
    <property type="protein sequence ID" value="ACD82221.1"/>
    <property type="molecule type" value="Genomic_DNA"/>
</dbReference>
<dbReference type="RefSeq" id="WP_012462503.1">
    <property type="nucleotide sequence ID" value="NC_010794.1"/>
</dbReference>
<dbReference type="SMR" id="B3DXI7"/>
<dbReference type="STRING" id="481448.Minf_0161"/>
<dbReference type="KEGG" id="min:Minf_0161"/>
<dbReference type="eggNOG" id="COG0223">
    <property type="taxonomic scope" value="Bacteria"/>
</dbReference>
<dbReference type="HOGENOM" id="CLU_033347_1_1_0"/>
<dbReference type="OrthoDB" id="9802815at2"/>
<dbReference type="Proteomes" id="UP000009149">
    <property type="component" value="Chromosome"/>
</dbReference>
<dbReference type="GO" id="GO:0005829">
    <property type="term" value="C:cytosol"/>
    <property type="evidence" value="ECO:0007669"/>
    <property type="project" value="TreeGrafter"/>
</dbReference>
<dbReference type="GO" id="GO:0004479">
    <property type="term" value="F:methionyl-tRNA formyltransferase activity"/>
    <property type="evidence" value="ECO:0007669"/>
    <property type="project" value="UniProtKB-UniRule"/>
</dbReference>
<dbReference type="CDD" id="cd08646">
    <property type="entry name" value="FMT_core_Met-tRNA-FMT_N"/>
    <property type="match status" value="1"/>
</dbReference>
<dbReference type="CDD" id="cd08704">
    <property type="entry name" value="Met_tRNA_FMT_C"/>
    <property type="match status" value="1"/>
</dbReference>
<dbReference type="Gene3D" id="3.10.25.10">
    <property type="entry name" value="Formyl transferase, C-terminal domain"/>
    <property type="match status" value="1"/>
</dbReference>
<dbReference type="Gene3D" id="3.40.50.170">
    <property type="entry name" value="Formyl transferase, N-terminal domain"/>
    <property type="match status" value="1"/>
</dbReference>
<dbReference type="HAMAP" id="MF_00182">
    <property type="entry name" value="Formyl_trans"/>
    <property type="match status" value="1"/>
</dbReference>
<dbReference type="InterPro" id="IPR005794">
    <property type="entry name" value="Fmt"/>
</dbReference>
<dbReference type="InterPro" id="IPR005793">
    <property type="entry name" value="Formyl_trans_C"/>
</dbReference>
<dbReference type="InterPro" id="IPR037022">
    <property type="entry name" value="Formyl_trans_C_sf"/>
</dbReference>
<dbReference type="InterPro" id="IPR002376">
    <property type="entry name" value="Formyl_transf_N"/>
</dbReference>
<dbReference type="InterPro" id="IPR036477">
    <property type="entry name" value="Formyl_transf_N_sf"/>
</dbReference>
<dbReference type="InterPro" id="IPR011034">
    <property type="entry name" value="Formyl_transferase-like_C_sf"/>
</dbReference>
<dbReference type="InterPro" id="IPR001555">
    <property type="entry name" value="GART_AS"/>
</dbReference>
<dbReference type="InterPro" id="IPR044135">
    <property type="entry name" value="Met-tRNA-FMT_C"/>
</dbReference>
<dbReference type="InterPro" id="IPR041711">
    <property type="entry name" value="Met-tRNA-FMT_N"/>
</dbReference>
<dbReference type="NCBIfam" id="TIGR00460">
    <property type="entry name" value="fmt"/>
    <property type="match status" value="1"/>
</dbReference>
<dbReference type="PANTHER" id="PTHR11138">
    <property type="entry name" value="METHIONYL-TRNA FORMYLTRANSFERASE"/>
    <property type="match status" value="1"/>
</dbReference>
<dbReference type="PANTHER" id="PTHR11138:SF5">
    <property type="entry name" value="METHIONYL-TRNA FORMYLTRANSFERASE, MITOCHONDRIAL"/>
    <property type="match status" value="1"/>
</dbReference>
<dbReference type="Pfam" id="PF02911">
    <property type="entry name" value="Formyl_trans_C"/>
    <property type="match status" value="1"/>
</dbReference>
<dbReference type="Pfam" id="PF00551">
    <property type="entry name" value="Formyl_trans_N"/>
    <property type="match status" value="1"/>
</dbReference>
<dbReference type="SUPFAM" id="SSF50486">
    <property type="entry name" value="FMT C-terminal domain-like"/>
    <property type="match status" value="1"/>
</dbReference>
<dbReference type="SUPFAM" id="SSF53328">
    <property type="entry name" value="Formyltransferase"/>
    <property type="match status" value="1"/>
</dbReference>
<dbReference type="PROSITE" id="PS00373">
    <property type="entry name" value="GART"/>
    <property type="match status" value="1"/>
</dbReference>
<proteinExistence type="inferred from homology"/>
<protein>
    <recommendedName>
        <fullName evidence="1">Methionyl-tRNA formyltransferase</fullName>
        <ecNumber evidence="1">2.1.2.9</ecNumber>
    </recommendedName>
</protein>